<accession>A6X1F1</accession>
<organism>
    <name type="scientific">Brucella anthropi (strain ATCC 49188 / DSM 6882 / CCUG 24695 / JCM 21032 / LMG 3331 / NBRC 15819 / NCTC 12168 / Alc 37)</name>
    <name type="common">Ochrobactrum anthropi</name>
    <dbReference type="NCBI Taxonomy" id="439375"/>
    <lineage>
        <taxon>Bacteria</taxon>
        <taxon>Pseudomonadati</taxon>
        <taxon>Pseudomonadota</taxon>
        <taxon>Alphaproteobacteria</taxon>
        <taxon>Hyphomicrobiales</taxon>
        <taxon>Brucellaceae</taxon>
        <taxon>Brucella/Ochrobactrum group</taxon>
        <taxon>Brucella</taxon>
    </lineage>
</organism>
<gene>
    <name evidence="1" type="primary">surE</name>
    <name type="ordered locus">Oant_2341</name>
</gene>
<reference key="1">
    <citation type="journal article" date="2011" name="J. Bacteriol.">
        <title>Genome of Ochrobactrum anthropi ATCC 49188 T, a versatile opportunistic pathogen and symbiont of several eukaryotic hosts.</title>
        <authorList>
            <person name="Chain P.S."/>
            <person name="Lang D.M."/>
            <person name="Comerci D.J."/>
            <person name="Malfatti S.A."/>
            <person name="Vergez L.M."/>
            <person name="Shin M."/>
            <person name="Ugalde R.A."/>
            <person name="Garcia E."/>
            <person name="Tolmasky M.E."/>
        </authorList>
    </citation>
    <scope>NUCLEOTIDE SEQUENCE [LARGE SCALE GENOMIC DNA]</scope>
    <source>
        <strain>ATCC 49188 / DSM 6882 / CCUG 24695 / JCM 21032 / LMG 3331 / NBRC 15819 / NCTC 12168 / Alc 37</strain>
    </source>
</reference>
<keyword id="KW-0963">Cytoplasm</keyword>
<keyword id="KW-0378">Hydrolase</keyword>
<keyword id="KW-0479">Metal-binding</keyword>
<keyword id="KW-0547">Nucleotide-binding</keyword>
<keyword id="KW-1185">Reference proteome</keyword>
<feature type="chain" id="PRO_1000007755" description="5'-nucleotidase SurE">
    <location>
        <begin position="1"/>
        <end position="258"/>
    </location>
</feature>
<feature type="binding site" evidence="1">
    <location>
        <position position="8"/>
    </location>
    <ligand>
        <name>a divalent metal cation</name>
        <dbReference type="ChEBI" id="CHEBI:60240"/>
    </ligand>
</feature>
<feature type="binding site" evidence="1">
    <location>
        <position position="9"/>
    </location>
    <ligand>
        <name>a divalent metal cation</name>
        <dbReference type="ChEBI" id="CHEBI:60240"/>
    </ligand>
</feature>
<feature type="binding site" evidence="1">
    <location>
        <position position="40"/>
    </location>
    <ligand>
        <name>a divalent metal cation</name>
        <dbReference type="ChEBI" id="CHEBI:60240"/>
    </ligand>
</feature>
<feature type="binding site" evidence="1">
    <location>
        <position position="92"/>
    </location>
    <ligand>
        <name>a divalent metal cation</name>
        <dbReference type="ChEBI" id="CHEBI:60240"/>
    </ligand>
</feature>
<protein>
    <recommendedName>
        <fullName evidence="1">5'-nucleotidase SurE</fullName>
        <ecNumber evidence="1">3.1.3.5</ecNumber>
    </recommendedName>
    <alternativeName>
        <fullName evidence="1">Nucleoside 5'-monophosphate phosphohydrolase</fullName>
    </alternativeName>
</protein>
<comment type="function">
    <text evidence="1">Nucleotidase that shows phosphatase activity on nucleoside 5'-monophosphates.</text>
</comment>
<comment type="catalytic activity">
    <reaction evidence="1">
        <text>a ribonucleoside 5'-phosphate + H2O = a ribonucleoside + phosphate</text>
        <dbReference type="Rhea" id="RHEA:12484"/>
        <dbReference type="ChEBI" id="CHEBI:15377"/>
        <dbReference type="ChEBI" id="CHEBI:18254"/>
        <dbReference type="ChEBI" id="CHEBI:43474"/>
        <dbReference type="ChEBI" id="CHEBI:58043"/>
        <dbReference type="EC" id="3.1.3.5"/>
    </reaction>
</comment>
<comment type="cofactor">
    <cofactor evidence="1">
        <name>a divalent metal cation</name>
        <dbReference type="ChEBI" id="CHEBI:60240"/>
    </cofactor>
    <text evidence="1">Binds 1 divalent metal cation per subunit.</text>
</comment>
<comment type="subcellular location">
    <subcellularLocation>
        <location evidence="1">Cytoplasm</location>
    </subcellularLocation>
</comment>
<comment type="similarity">
    <text evidence="1">Belongs to the SurE nucleotidase family.</text>
</comment>
<evidence type="ECO:0000255" key="1">
    <source>
        <dbReference type="HAMAP-Rule" id="MF_00060"/>
    </source>
</evidence>
<proteinExistence type="inferred from homology"/>
<dbReference type="EC" id="3.1.3.5" evidence="1"/>
<dbReference type="EMBL" id="CP000758">
    <property type="protein sequence ID" value="ABS15055.1"/>
    <property type="molecule type" value="Genomic_DNA"/>
</dbReference>
<dbReference type="RefSeq" id="WP_012092210.1">
    <property type="nucleotide sequence ID" value="NC_009667.1"/>
</dbReference>
<dbReference type="SMR" id="A6X1F1"/>
<dbReference type="STRING" id="439375.Oant_2341"/>
<dbReference type="KEGG" id="oan:Oant_2341"/>
<dbReference type="PATRIC" id="fig|439375.7.peg.2471"/>
<dbReference type="eggNOG" id="COG0496">
    <property type="taxonomic scope" value="Bacteria"/>
</dbReference>
<dbReference type="HOGENOM" id="CLU_045192_1_2_5"/>
<dbReference type="PhylomeDB" id="A6X1F1"/>
<dbReference type="Proteomes" id="UP000002301">
    <property type="component" value="Chromosome 1"/>
</dbReference>
<dbReference type="GO" id="GO:0005737">
    <property type="term" value="C:cytoplasm"/>
    <property type="evidence" value="ECO:0007669"/>
    <property type="project" value="UniProtKB-SubCell"/>
</dbReference>
<dbReference type="GO" id="GO:0008254">
    <property type="term" value="F:3'-nucleotidase activity"/>
    <property type="evidence" value="ECO:0007669"/>
    <property type="project" value="TreeGrafter"/>
</dbReference>
<dbReference type="GO" id="GO:0008253">
    <property type="term" value="F:5'-nucleotidase activity"/>
    <property type="evidence" value="ECO:0007669"/>
    <property type="project" value="UniProtKB-UniRule"/>
</dbReference>
<dbReference type="GO" id="GO:0004309">
    <property type="term" value="F:exopolyphosphatase activity"/>
    <property type="evidence" value="ECO:0007669"/>
    <property type="project" value="TreeGrafter"/>
</dbReference>
<dbReference type="GO" id="GO:0046872">
    <property type="term" value="F:metal ion binding"/>
    <property type="evidence" value="ECO:0007669"/>
    <property type="project" value="UniProtKB-UniRule"/>
</dbReference>
<dbReference type="GO" id="GO:0000166">
    <property type="term" value="F:nucleotide binding"/>
    <property type="evidence" value="ECO:0007669"/>
    <property type="project" value="UniProtKB-KW"/>
</dbReference>
<dbReference type="FunFam" id="3.40.1210.10:FF:000001">
    <property type="entry name" value="5'/3'-nucleotidase SurE"/>
    <property type="match status" value="1"/>
</dbReference>
<dbReference type="Gene3D" id="3.40.1210.10">
    <property type="entry name" value="Survival protein SurE-like phosphatase/nucleotidase"/>
    <property type="match status" value="1"/>
</dbReference>
<dbReference type="HAMAP" id="MF_00060">
    <property type="entry name" value="SurE"/>
    <property type="match status" value="1"/>
</dbReference>
<dbReference type="InterPro" id="IPR030048">
    <property type="entry name" value="SurE"/>
</dbReference>
<dbReference type="InterPro" id="IPR002828">
    <property type="entry name" value="SurE-like_Pase/nucleotidase"/>
</dbReference>
<dbReference type="InterPro" id="IPR036523">
    <property type="entry name" value="SurE-like_sf"/>
</dbReference>
<dbReference type="NCBIfam" id="NF001490">
    <property type="entry name" value="PRK00346.1-4"/>
    <property type="match status" value="1"/>
</dbReference>
<dbReference type="NCBIfam" id="TIGR00087">
    <property type="entry name" value="surE"/>
    <property type="match status" value="1"/>
</dbReference>
<dbReference type="PANTHER" id="PTHR30457">
    <property type="entry name" value="5'-NUCLEOTIDASE SURE"/>
    <property type="match status" value="1"/>
</dbReference>
<dbReference type="PANTHER" id="PTHR30457:SF12">
    <property type="entry name" value="5'_3'-NUCLEOTIDASE SURE"/>
    <property type="match status" value="1"/>
</dbReference>
<dbReference type="Pfam" id="PF01975">
    <property type="entry name" value="SurE"/>
    <property type="match status" value="1"/>
</dbReference>
<dbReference type="SUPFAM" id="SSF64167">
    <property type="entry name" value="SurE-like"/>
    <property type="match status" value="1"/>
</dbReference>
<sequence>MRILLTNDDGIHAEGLAVLERIARKLSDDVWVVAPETDQSGLAHSLTLSEPLRLRQIDDRHFALRGTPTDCVIMGVRHVLPGAPDLILSGVNSGANIADDVTYSGTVAGAMEGTLLGVRSIALSQEYEYEGDRRIVPWETAETHAPDLIKKLMEAGWPEGVLLNLNFPNCGADEVKGTRVTAQGKLSHDARLDERRDGRGFPYFWLHFGRGKAPVADDSDIAAIRSDCISVTPLHLDLTAHKVRAELSAALGVVELGG</sequence>
<name>SURE_BRUA4</name>